<organism>
    <name type="scientific">Edwardsiella ictaluri (strain 93-146)</name>
    <dbReference type="NCBI Taxonomy" id="634503"/>
    <lineage>
        <taxon>Bacteria</taxon>
        <taxon>Pseudomonadati</taxon>
        <taxon>Pseudomonadota</taxon>
        <taxon>Gammaproteobacteria</taxon>
        <taxon>Enterobacterales</taxon>
        <taxon>Hafniaceae</taxon>
        <taxon>Edwardsiella</taxon>
    </lineage>
</organism>
<feature type="chain" id="PRO_1000213733" description="UDP-4-amino-4-deoxy-L-arabinose--oxoglutarate aminotransferase">
    <location>
        <begin position="1"/>
        <end position="381"/>
    </location>
</feature>
<feature type="modified residue" description="N6-(pyridoxal phosphate)lysine" evidence="1">
    <location>
        <position position="182"/>
    </location>
</feature>
<comment type="function">
    <text evidence="1">Catalyzes the conversion of UDP-4-keto-arabinose (UDP-Ara4O) to UDP-4-amino-4-deoxy-L-arabinose (UDP-L-Ara4N). The modified arabinose is attached to lipid A and is required for resistance to polymyxin and cationic antimicrobial peptides.</text>
</comment>
<comment type="catalytic activity">
    <reaction evidence="1">
        <text>UDP-4-amino-4-deoxy-beta-L-arabinose + 2-oxoglutarate = UDP-beta-L-threo-pentopyranos-4-ulose + L-glutamate</text>
        <dbReference type="Rhea" id="RHEA:24710"/>
        <dbReference type="ChEBI" id="CHEBI:16810"/>
        <dbReference type="ChEBI" id="CHEBI:29985"/>
        <dbReference type="ChEBI" id="CHEBI:58708"/>
        <dbReference type="ChEBI" id="CHEBI:58710"/>
        <dbReference type="EC" id="2.6.1.87"/>
    </reaction>
</comment>
<comment type="cofactor">
    <cofactor evidence="1">
        <name>pyridoxal 5'-phosphate</name>
        <dbReference type="ChEBI" id="CHEBI:597326"/>
    </cofactor>
</comment>
<comment type="pathway">
    <text evidence="1">Nucleotide-sugar biosynthesis; UDP-4-deoxy-4-formamido-beta-L-arabinose biosynthesis; UDP-4-deoxy-4-formamido-beta-L-arabinose from UDP-alpha-D-glucuronate: step 2/3.</text>
</comment>
<comment type="pathway">
    <text evidence="1">Bacterial outer membrane biogenesis; lipopolysaccharide biosynthesis.</text>
</comment>
<comment type="subunit">
    <text evidence="1">Homodimer.</text>
</comment>
<comment type="similarity">
    <text evidence="1">Belongs to the DegT/DnrJ/EryC1 family. ArnB subfamily.</text>
</comment>
<gene>
    <name evidence="1" type="primary">arnB</name>
    <name type="ordered locus">NT01EI_1413</name>
</gene>
<accession>C5BDQ4</accession>
<protein>
    <recommendedName>
        <fullName evidence="1">UDP-4-amino-4-deoxy-L-arabinose--oxoglutarate aminotransferase</fullName>
        <ecNumber evidence="1">2.6.1.87</ecNumber>
    </recommendedName>
    <alternativeName>
        <fullName evidence="1">UDP-(beta-L-threo-pentapyranosyl-4''-ulose diphosphate) aminotransferase</fullName>
        <shortName evidence="1">UDP-Ara4O aminotransferase</shortName>
    </alternativeName>
    <alternativeName>
        <fullName evidence="1">UDP-4-amino-4-deoxy-L-arabinose aminotransferase</fullName>
    </alternativeName>
</protein>
<dbReference type="EC" id="2.6.1.87" evidence="1"/>
<dbReference type="EMBL" id="CP001600">
    <property type="protein sequence ID" value="ACR68602.1"/>
    <property type="molecule type" value="Genomic_DNA"/>
</dbReference>
<dbReference type="RefSeq" id="WP_015870767.1">
    <property type="nucleotide sequence ID" value="NZ_CP169062.1"/>
</dbReference>
<dbReference type="SMR" id="C5BDQ4"/>
<dbReference type="STRING" id="67780.B6E78_00410"/>
<dbReference type="GeneID" id="69538421"/>
<dbReference type="KEGG" id="eic:NT01EI_1413"/>
<dbReference type="PATRIC" id="fig|634503.3.peg.1273"/>
<dbReference type="HOGENOM" id="CLU_033332_0_3_6"/>
<dbReference type="OrthoDB" id="9804264at2"/>
<dbReference type="UniPathway" id="UPA00030"/>
<dbReference type="UniPathway" id="UPA00032">
    <property type="reaction ID" value="UER00493"/>
</dbReference>
<dbReference type="Proteomes" id="UP000001485">
    <property type="component" value="Chromosome"/>
</dbReference>
<dbReference type="GO" id="GO:0016020">
    <property type="term" value="C:membrane"/>
    <property type="evidence" value="ECO:0007669"/>
    <property type="project" value="GOC"/>
</dbReference>
<dbReference type="GO" id="GO:0030170">
    <property type="term" value="F:pyridoxal phosphate binding"/>
    <property type="evidence" value="ECO:0007669"/>
    <property type="project" value="TreeGrafter"/>
</dbReference>
<dbReference type="GO" id="GO:0099620">
    <property type="term" value="F:UDP-4-amino-4-deoxy-L-arabinose aminotransferase"/>
    <property type="evidence" value="ECO:0007669"/>
    <property type="project" value="UniProtKB-EC"/>
</dbReference>
<dbReference type="GO" id="GO:0009245">
    <property type="term" value="P:lipid A biosynthetic process"/>
    <property type="evidence" value="ECO:0007669"/>
    <property type="project" value="UniProtKB-KW"/>
</dbReference>
<dbReference type="GO" id="GO:0009103">
    <property type="term" value="P:lipopolysaccharide biosynthetic process"/>
    <property type="evidence" value="ECO:0007669"/>
    <property type="project" value="UniProtKB-UniRule"/>
</dbReference>
<dbReference type="GO" id="GO:0046677">
    <property type="term" value="P:response to antibiotic"/>
    <property type="evidence" value="ECO:0007669"/>
    <property type="project" value="UniProtKB-KW"/>
</dbReference>
<dbReference type="CDD" id="cd00616">
    <property type="entry name" value="AHBA_syn"/>
    <property type="match status" value="1"/>
</dbReference>
<dbReference type="FunFam" id="3.40.640.10:FF:000040">
    <property type="entry name" value="UDP-4-amino-4-deoxy-L-arabinose--oxoglutarate aminotransferase"/>
    <property type="match status" value="1"/>
</dbReference>
<dbReference type="FunFam" id="3.90.1150.10:FF:000030">
    <property type="entry name" value="UDP-4-amino-4-deoxy-L-arabinose--oxoglutarate aminotransferase"/>
    <property type="match status" value="1"/>
</dbReference>
<dbReference type="Gene3D" id="3.90.1150.10">
    <property type="entry name" value="Aspartate Aminotransferase, domain 1"/>
    <property type="match status" value="1"/>
</dbReference>
<dbReference type="Gene3D" id="3.40.640.10">
    <property type="entry name" value="Type I PLP-dependent aspartate aminotransferase-like (Major domain)"/>
    <property type="match status" value="1"/>
</dbReference>
<dbReference type="HAMAP" id="MF_01167">
    <property type="entry name" value="ArnB_transfer"/>
    <property type="match status" value="1"/>
</dbReference>
<dbReference type="InterPro" id="IPR022850">
    <property type="entry name" value="ArnB_NH2Trfase"/>
</dbReference>
<dbReference type="InterPro" id="IPR000653">
    <property type="entry name" value="DegT/StrS_aminotransferase"/>
</dbReference>
<dbReference type="InterPro" id="IPR015424">
    <property type="entry name" value="PyrdxlP-dep_Trfase"/>
</dbReference>
<dbReference type="InterPro" id="IPR015421">
    <property type="entry name" value="PyrdxlP-dep_Trfase_major"/>
</dbReference>
<dbReference type="InterPro" id="IPR015422">
    <property type="entry name" value="PyrdxlP-dep_Trfase_small"/>
</dbReference>
<dbReference type="NCBIfam" id="NF008658">
    <property type="entry name" value="PRK11658.1"/>
    <property type="match status" value="1"/>
</dbReference>
<dbReference type="PANTHER" id="PTHR30244">
    <property type="entry name" value="TRANSAMINASE"/>
    <property type="match status" value="1"/>
</dbReference>
<dbReference type="PANTHER" id="PTHR30244:SF41">
    <property type="entry name" value="UDP-4-AMINO-4-DEOXY-L-ARABINOSE--OXOGLUTARATE AMINOTRANSFERASE"/>
    <property type="match status" value="1"/>
</dbReference>
<dbReference type="Pfam" id="PF01041">
    <property type="entry name" value="DegT_DnrJ_EryC1"/>
    <property type="match status" value="1"/>
</dbReference>
<dbReference type="PIRSF" id="PIRSF000390">
    <property type="entry name" value="PLP_StrS"/>
    <property type="match status" value="1"/>
</dbReference>
<dbReference type="SUPFAM" id="SSF53383">
    <property type="entry name" value="PLP-dependent transferases"/>
    <property type="match status" value="1"/>
</dbReference>
<proteinExistence type="inferred from homology"/>
<reference key="1">
    <citation type="submission" date="2009-03" db="EMBL/GenBank/DDBJ databases">
        <title>Complete genome sequence of Edwardsiella ictaluri 93-146.</title>
        <authorList>
            <person name="Williams M.L."/>
            <person name="Gillaspy A.F."/>
            <person name="Dyer D.W."/>
            <person name="Thune R.L."/>
            <person name="Waldbieser G.C."/>
            <person name="Schuster S.C."/>
            <person name="Gipson J."/>
            <person name="Zaitshik J."/>
            <person name="Landry C."/>
            <person name="Lawrence M.L."/>
        </authorList>
    </citation>
    <scope>NUCLEOTIDE SEQUENCE [LARGE SCALE GENOMIC DNA]</scope>
    <source>
        <strain>93-146</strain>
    </source>
</reference>
<sequence length="381" mass="41862">MKDFLPFSKPAIGDEEIAAVSEVLRSGWITTGPQNQALEQEFCQATGARHAIAVCSATAGMHVTLMALGIGPGDEVITPSMTWVSTLNIITLLGATPVMIDVGRDTLMVTPEAIADAITPRTKAIIPVHFAGAPVDLDPIRALAQRQGIALIEDAAHAIGTAYRGEPIGQRGTAIFSFHAIKNVTCAEGGMVVTDDDRLAQQVRSLKFHGLGVDAYDRQTHGRAPQAEVVTPGYKYNLADINAAIARVQLAKLPELNARRARLAAYYLQQLAQHQLPFSPLNTPEWPHQHAWHLFIIRCDEARSGVDRDRLMQALKERNIGSGLHFRAAHTQKYYRESYPQLRLAQTEWNSQRICSLPLFPDMTEADVDRVIAALKEIIEQ</sequence>
<name>ARNB_EDWI9</name>
<keyword id="KW-0032">Aminotransferase</keyword>
<keyword id="KW-0046">Antibiotic resistance</keyword>
<keyword id="KW-0441">Lipid A biosynthesis</keyword>
<keyword id="KW-0444">Lipid biosynthesis</keyword>
<keyword id="KW-0443">Lipid metabolism</keyword>
<keyword id="KW-0448">Lipopolysaccharide biosynthesis</keyword>
<keyword id="KW-0663">Pyridoxal phosphate</keyword>
<keyword id="KW-0808">Transferase</keyword>
<evidence type="ECO:0000255" key="1">
    <source>
        <dbReference type="HAMAP-Rule" id="MF_01167"/>
    </source>
</evidence>